<reference key="1">
    <citation type="journal article" date="2003" name="Plant Cell Physiol.">
        <title>The sucrose transporter gene family in rice.</title>
        <authorList>
            <person name="Aoki N."/>
            <person name="Hirose T."/>
            <person name="Scofield G.N."/>
            <person name="Whitfeld P.R."/>
            <person name="Furbank R.T."/>
        </authorList>
    </citation>
    <scope>NUCLEOTIDE SEQUENCE [MRNA]</scope>
    <scope>TISSUE SPECIFICITY</scope>
    <scope>DEVELOPMENTAL STAGE</scope>
    <source>
        <strain>cv. Nipponbare</strain>
        <tissue>Panicle</tissue>
    </source>
</reference>
<reference key="2">
    <citation type="journal article" date="2003" name="Science">
        <title>In-depth view of structure, activity, and evolution of rice chromosome 10.</title>
        <authorList>
            <person name="Yu Y."/>
            <person name="Rambo T."/>
            <person name="Currie J."/>
            <person name="Saski C."/>
            <person name="Kim H.-R."/>
            <person name="Collura K."/>
            <person name="Thompson S."/>
            <person name="Simmons J."/>
            <person name="Yang T.-J."/>
            <person name="Nah G."/>
            <person name="Patel A.J."/>
            <person name="Thurmond S."/>
            <person name="Henry D."/>
            <person name="Oates R."/>
            <person name="Palmer M."/>
            <person name="Pries G."/>
            <person name="Gibson J."/>
            <person name="Anderson H."/>
            <person name="Paradkar M."/>
            <person name="Crane L."/>
            <person name="Dale J."/>
            <person name="Carver M.B."/>
            <person name="Wood T."/>
            <person name="Frisch D."/>
            <person name="Engler F."/>
            <person name="Soderlund C."/>
            <person name="Palmer L.E."/>
            <person name="Teytelman L."/>
            <person name="Nascimento L."/>
            <person name="De la Bastide M."/>
            <person name="Spiegel L."/>
            <person name="Ware D."/>
            <person name="O'Shaughnessy A."/>
            <person name="Dike S."/>
            <person name="Dedhia N."/>
            <person name="Preston R."/>
            <person name="Huang E."/>
            <person name="Ferraro K."/>
            <person name="Kuit K."/>
            <person name="Miller B."/>
            <person name="Zutavern T."/>
            <person name="Katzenberger F."/>
            <person name="Muller S."/>
            <person name="Balija V."/>
            <person name="Martienssen R.A."/>
            <person name="Stein L."/>
            <person name="Minx P."/>
            <person name="Johnson D."/>
            <person name="Cordum H."/>
            <person name="Mardis E."/>
            <person name="Cheng Z."/>
            <person name="Jiang J."/>
            <person name="Wilson R."/>
            <person name="McCombie W.R."/>
            <person name="Wing R.A."/>
            <person name="Yuan Q."/>
            <person name="Ouyang S."/>
            <person name="Liu J."/>
            <person name="Jones K.M."/>
            <person name="Gansberger K."/>
            <person name="Moffat K."/>
            <person name="Hill J."/>
            <person name="Tsitrin T."/>
            <person name="Overton L."/>
            <person name="Bera J."/>
            <person name="Kim M."/>
            <person name="Jin S."/>
            <person name="Tallon L."/>
            <person name="Ciecko A."/>
            <person name="Pai G."/>
            <person name="Van Aken S."/>
            <person name="Utterback T."/>
            <person name="Reidmuller S."/>
            <person name="Bormann J."/>
            <person name="Feldblyum T."/>
            <person name="Hsiao J."/>
            <person name="Zismann V."/>
            <person name="Blunt S."/>
            <person name="de Vazeille A.R."/>
            <person name="Shaffer T."/>
            <person name="Koo H."/>
            <person name="Suh B."/>
            <person name="Yang Q."/>
            <person name="Haas B."/>
            <person name="Peterson J."/>
            <person name="Pertea M."/>
            <person name="Volfovsky N."/>
            <person name="Wortman J."/>
            <person name="White O."/>
            <person name="Salzberg S.L."/>
            <person name="Fraser C.M."/>
            <person name="Buell C.R."/>
            <person name="Messing J."/>
            <person name="Song R."/>
            <person name="Fuks G."/>
            <person name="Llaca V."/>
            <person name="Kovchak S."/>
            <person name="Young S."/>
            <person name="Bowers J.E."/>
            <person name="Paterson A.H."/>
            <person name="Johns M.A."/>
            <person name="Mao L."/>
            <person name="Pan H."/>
            <person name="Dean R.A."/>
        </authorList>
    </citation>
    <scope>NUCLEOTIDE SEQUENCE [LARGE SCALE GENOMIC DNA]</scope>
    <source>
        <strain>cv. Nipponbare</strain>
    </source>
</reference>
<reference key="3">
    <citation type="journal article" date="2005" name="Nature">
        <title>The map-based sequence of the rice genome.</title>
        <authorList>
            <consortium name="International rice genome sequencing project (IRGSP)"/>
        </authorList>
    </citation>
    <scope>NUCLEOTIDE SEQUENCE [LARGE SCALE GENOMIC DNA]</scope>
    <source>
        <strain>cv. Nipponbare</strain>
    </source>
</reference>
<reference key="4">
    <citation type="journal article" date="2008" name="Nucleic Acids Res.">
        <title>The rice annotation project database (RAP-DB): 2008 update.</title>
        <authorList>
            <consortium name="The rice annotation project (RAP)"/>
        </authorList>
    </citation>
    <scope>GENOME REANNOTATION</scope>
    <source>
        <strain>cv. Nipponbare</strain>
    </source>
</reference>
<reference key="5">
    <citation type="journal article" date="2013" name="Rice">
        <title>Improvement of the Oryza sativa Nipponbare reference genome using next generation sequence and optical map data.</title>
        <authorList>
            <person name="Kawahara Y."/>
            <person name="de la Bastide M."/>
            <person name="Hamilton J.P."/>
            <person name="Kanamori H."/>
            <person name="McCombie W.R."/>
            <person name="Ouyang S."/>
            <person name="Schwartz D.C."/>
            <person name="Tanaka T."/>
            <person name="Wu J."/>
            <person name="Zhou S."/>
            <person name="Childs K.L."/>
            <person name="Davidson R.M."/>
            <person name="Lin H."/>
            <person name="Quesada-Ocampo L."/>
            <person name="Vaillancourt B."/>
            <person name="Sakai H."/>
            <person name="Lee S.S."/>
            <person name="Kim J."/>
            <person name="Numa H."/>
            <person name="Itoh T."/>
            <person name="Buell C.R."/>
            <person name="Matsumoto T."/>
        </authorList>
    </citation>
    <scope>GENOME REANNOTATION</scope>
    <source>
        <strain>cv. Nipponbare</strain>
    </source>
</reference>
<reference key="6">
    <citation type="journal article" date="2010" name="J. Exp. Bot.">
        <title>Disruption of a gene for rice sucrose transporter, OsSUT1, impairs pollen function but pollen maturation is unaffected.</title>
        <authorList>
            <person name="Hirose T."/>
            <person name="Zhang Z."/>
            <person name="Miyao A."/>
            <person name="Hirochika H."/>
            <person name="Ohsugi R."/>
            <person name="Terao T."/>
        </authorList>
    </citation>
    <scope>DEVELOPMENTAL STAGE</scope>
</reference>
<protein>
    <recommendedName>
        <fullName>Sucrose transport protein SUT3</fullName>
    </recommendedName>
    <alternativeName>
        <fullName>Sucrose permease 3</fullName>
    </alternativeName>
    <alternativeName>
        <fullName>Sucrose transporter 3</fullName>
        <shortName>OsSUT3</shortName>
    </alternativeName>
    <alternativeName>
        <fullName>Sucrose-proton symporter 3</fullName>
    </alternativeName>
</protein>
<gene>
    <name type="primary">SUT3</name>
    <name type="ordered locus">Os10g0404500</name>
    <name type="ordered locus">LOC_Os10g26470</name>
    <name type="ORF">OSJNBb0044I14.9</name>
</gene>
<proteinExistence type="evidence at transcript level"/>
<keyword id="KW-1003">Cell membrane</keyword>
<keyword id="KW-0472">Membrane</keyword>
<keyword id="KW-1185">Reference proteome</keyword>
<keyword id="KW-0762">Sugar transport</keyword>
<keyword id="KW-0769">Symport</keyword>
<keyword id="KW-0812">Transmembrane</keyword>
<keyword id="KW-1133">Transmembrane helix</keyword>
<keyword id="KW-0813">Transport</keyword>
<feature type="chain" id="PRO_0000398191" description="Sucrose transport protein SUT3">
    <location>
        <begin position="1"/>
        <end position="506"/>
    </location>
</feature>
<feature type="topological domain" description="Cytoplasmic" evidence="2">
    <location>
        <begin position="1"/>
        <end position="20"/>
    </location>
</feature>
<feature type="transmembrane region" description="Helical" evidence="2">
    <location>
        <begin position="21"/>
        <end position="41"/>
    </location>
</feature>
<feature type="topological domain" description="Extracellular" evidence="2">
    <location>
        <begin position="42"/>
        <end position="54"/>
    </location>
</feature>
<feature type="transmembrane region" description="Helical" evidence="2">
    <location>
        <begin position="55"/>
        <end position="75"/>
    </location>
</feature>
<feature type="topological domain" description="Cytoplasmic" evidence="2">
    <location>
        <begin position="76"/>
        <end position="94"/>
    </location>
</feature>
<feature type="transmembrane region" description="Helical" evidence="2">
    <location>
        <begin position="95"/>
        <end position="115"/>
    </location>
</feature>
<feature type="topological domain" description="Extracellular" evidence="2">
    <location>
        <begin position="116"/>
        <end position="135"/>
    </location>
</feature>
<feature type="transmembrane region" description="Helical" evidence="2">
    <location>
        <begin position="136"/>
        <end position="156"/>
    </location>
</feature>
<feature type="topological domain" description="Cytoplasmic" evidence="2">
    <location>
        <begin position="157"/>
        <end position="171"/>
    </location>
</feature>
<feature type="transmembrane region" description="Helical" evidence="2">
    <location>
        <begin position="172"/>
        <end position="192"/>
    </location>
</feature>
<feature type="topological domain" description="Extracellular" evidence="2">
    <location>
        <begin position="193"/>
        <end position="220"/>
    </location>
</feature>
<feature type="transmembrane region" description="Helical" evidence="2">
    <location>
        <begin position="221"/>
        <end position="241"/>
    </location>
</feature>
<feature type="topological domain" description="Cytoplasmic" evidence="2">
    <location>
        <begin position="242"/>
        <end position="275"/>
    </location>
</feature>
<feature type="transmembrane region" description="Helical" evidence="2">
    <location>
        <begin position="276"/>
        <end position="296"/>
    </location>
</feature>
<feature type="topological domain" description="Extracellular" evidence="2">
    <location>
        <begin position="297"/>
        <end position="327"/>
    </location>
</feature>
<feature type="transmembrane region" description="Helical" evidence="2">
    <location>
        <begin position="328"/>
        <end position="348"/>
    </location>
</feature>
<feature type="topological domain" description="Cytoplasmic" evidence="2">
    <location>
        <begin position="349"/>
        <end position="355"/>
    </location>
</feature>
<feature type="transmembrane region" description="Helical" evidence="2">
    <location>
        <begin position="356"/>
        <end position="376"/>
    </location>
</feature>
<feature type="topological domain" description="Extracellular" evidence="2">
    <location>
        <begin position="377"/>
        <end position="404"/>
    </location>
</feature>
<feature type="transmembrane region" description="Helical" evidence="2">
    <location>
        <begin position="405"/>
        <end position="425"/>
    </location>
</feature>
<feature type="topological domain" description="Cytoplasmic" evidence="2">
    <location>
        <begin position="426"/>
        <end position="441"/>
    </location>
</feature>
<feature type="transmembrane region" description="Helical" evidence="2">
    <location>
        <begin position="442"/>
        <end position="462"/>
    </location>
</feature>
<feature type="topological domain" description="Extracellular" evidence="2">
    <location>
        <begin position="463"/>
        <end position="470"/>
    </location>
</feature>
<feature type="transmembrane region" description="Helical" evidence="2">
    <location>
        <begin position="471"/>
        <end position="491"/>
    </location>
</feature>
<feature type="topological domain" description="Cytoplasmic" evidence="2">
    <location>
        <begin position="492"/>
        <end position="506"/>
    </location>
</feature>
<sequence length="506" mass="52777">MAVDMELDGGGDGKGKAPPQISLSGLFLACMVAGGVQYGWALQLSLLTPYVQTLGIPHALTSVMWLCGPIAGLIVQPCVGLYSDKCTSSLGRRRPFILTGCIIICISVIVIGFSSDIGYALGDTTEDCKVYRGPRYHAAAAFILGFWLLDFSNNTVQGPARALMADLSGRHGPSAANAIFCSWMALGNILGYSSGSTNDWHKWFPFLMTRACCEACANLKAAFLVAVVFLGLSTAVTMVFAREVALDPVAAAKRNEGEASGLLAVFKGMKNLPVGMPSVLIVTGLTWLSWFPFILFDTDWMGREIYHGRPDGSPAEVTAFQEGVRQGAFGLLLNSIVLGISSFLIEPMCRRLGARAVWVMSSAVVCVAMAAVSVLSAWSLGDFGGSVQDAARAPAEEGGVRASALALFVFLGLPFAVLCSVPFAVTAQLAASRGGGQGLCTGVLNISIVVPQMAIALGAGPWDELFGEGNIPAFAMASVFAAAAAAAGVVLLPKVSVRSVSMAGGH</sequence>
<name>SUT3_ORYSJ</name>
<comment type="function">
    <text evidence="1">Responsible for the transport of sucrose into the cell, with the concomitant uptake of protons (symport system). May also transport other glucosides (By similarity).</text>
</comment>
<comment type="pathway">
    <text>Glycan biosynthesis; sucrose metabolism.</text>
</comment>
<comment type="subunit">
    <text evidence="1">Homodimer.</text>
</comment>
<comment type="subcellular location">
    <subcellularLocation>
        <location evidence="5">Cell membrane</location>
        <topology evidence="5">Multi-pass membrane protein</topology>
    </subcellularLocation>
</comment>
<comment type="tissue specificity">
    <text evidence="3">Widely expressed. Highest expression in sink leaves and lowest in germinating seeds.</text>
</comment>
<comment type="developmental stage">
    <text evidence="3 4">Expressed in developing caryopses from 1 to 7 days after flowering (DAF) and then declines to nearly undetectable levels by 20 DAF. Expressed in developing pollen from 7 to 0 day before anthesis.</text>
</comment>
<comment type="similarity">
    <text evidence="5">Belongs to the glycoside-pentoside-hexuronide (GPH) cation symporter transporter (TC 2.A.2.4) family.</text>
</comment>
<comment type="sequence caution" evidence="5">
    <conflict type="erroneous gene model prediction">
        <sequence resource="EMBL-CDS" id="AAK92667"/>
    </conflict>
</comment>
<dbReference type="EMBL" id="AB071809">
    <property type="protein sequence ID" value="BAB68368.1"/>
    <property type="molecule type" value="mRNA"/>
</dbReference>
<dbReference type="EMBL" id="AC090487">
    <property type="protein sequence ID" value="AAK92667.1"/>
    <property type="status" value="ALT_SEQ"/>
    <property type="molecule type" value="Genomic_DNA"/>
</dbReference>
<dbReference type="EMBL" id="DP000086">
    <property type="protein sequence ID" value="ABB47568.1"/>
    <property type="molecule type" value="Genomic_DNA"/>
</dbReference>
<dbReference type="EMBL" id="AP008216">
    <property type="protein sequence ID" value="BAF26469.1"/>
    <property type="molecule type" value="Genomic_DNA"/>
</dbReference>
<dbReference type="EMBL" id="AP014966">
    <property type="status" value="NOT_ANNOTATED_CDS"/>
    <property type="molecule type" value="Genomic_DNA"/>
</dbReference>
<dbReference type="RefSeq" id="XP_015613774.1">
    <property type="nucleotide sequence ID" value="XM_015758288.1"/>
</dbReference>
<dbReference type="SMR" id="Q948L0"/>
<dbReference type="FunCoup" id="Q948L0">
    <property type="interactions" value="579"/>
</dbReference>
<dbReference type="PaxDb" id="39947-Q948L0"/>
<dbReference type="KEGG" id="dosa:Os10g0404500"/>
<dbReference type="eggNOG" id="KOG0637">
    <property type="taxonomic scope" value="Eukaryota"/>
</dbReference>
<dbReference type="InParanoid" id="Q948L0"/>
<dbReference type="OrthoDB" id="28755at2759"/>
<dbReference type="UniPathway" id="UPA00238"/>
<dbReference type="Proteomes" id="UP000000763">
    <property type="component" value="Chromosome 10"/>
</dbReference>
<dbReference type="Proteomes" id="UP000059680">
    <property type="component" value="Chromosome 10"/>
</dbReference>
<dbReference type="GO" id="GO:0016020">
    <property type="term" value="C:membrane"/>
    <property type="evidence" value="ECO:0000318"/>
    <property type="project" value="GO_Central"/>
</dbReference>
<dbReference type="GO" id="GO:0005886">
    <property type="term" value="C:plasma membrane"/>
    <property type="evidence" value="ECO:0007669"/>
    <property type="project" value="UniProtKB-SubCell"/>
</dbReference>
<dbReference type="GO" id="GO:0008506">
    <property type="term" value="F:sucrose:proton symporter activity"/>
    <property type="evidence" value="ECO:0000318"/>
    <property type="project" value="GO_Central"/>
</dbReference>
<dbReference type="GO" id="GO:0005985">
    <property type="term" value="P:sucrose metabolic process"/>
    <property type="evidence" value="ECO:0007669"/>
    <property type="project" value="UniProtKB-UniPathway"/>
</dbReference>
<dbReference type="CDD" id="cd17313">
    <property type="entry name" value="MFS_SLC45_SUC"/>
    <property type="match status" value="1"/>
</dbReference>
<dbReference type="FunFam" id="1.20.1250.20:FF:000169">
    <property type="entry name" value="Sucrose transport protein SUC3"/>
    <property type="match status" value="1"/>
</dbReference>
<dbReference type="Gene3D" id="1.20.1250.20">
    <property type="entry name" value="MFS general substrate transporter like domains"/>
    <property type="match status" value="1"/>
</dbReference>
<dbReference type="InterPro" id="IPR036259">
    <property type="entry name" value="MFS_trans_sf"/>
</dbReference>
<dbReference type="PANTHER" id="PTHR19432:SF39">
    <property type="entry name" value="SUCROSE TRANSPORT PROTEIN SUT3"/>
    <property type="match status" value="1"/>
</dbReference>
<dbReference type="PANTHER" id="PTHR19432">
    <property type="entry name" value="SUGAR TRANSPORTER"/>
    <property type="match status" value="1"/>
</dbReference>
<dbReference type="Pfam" id="PF13347">
    <property type="entry name" value="MFS_2"/>
    <property type="match status" value="1"/>
</dbReference>
<dbReference type="SUPFAM" id="SSF103473">
    <property type="entry name" value="MFS general substrate transporter"/>
    <property type="match status" value="1"/>
</dbReference>
<evidence type="ECO:0000250" key="1"/>
<evidence type="ECO:0000255" key="2"/>
<evidence type="ECO:0000269" key="3">
    <source>
    </source>
</evidence>
<evidence type="ECO:0000269" key="4">
    <source>
    </source>
</evidence>
<evidence type="ECO:0000305" key="5"/>
<accession>Q948L0</accession>
<accession>Q94GL2</accession>
<organism>
    <name type="scientific">Oryza sativa subsp. japonica</name>
    <name type="common">Rice</name>
    <dbReference type="NCBI Taxonomy" id="39947"/>
    <lineage>
        <taxon>Eukaryota</taxon>
        <taxon>Viridiplantae</taxon>
        <taxon>Streptophyta</taxon>
        <taxon>Embryophyta</taxon>
        <taxon>Tracheophyta</taxon>
        <taxon>Spermatophyta</taxon>
        <taxon>Magnoliopsida</taxon>
        <taxon>Liliopsida</taxon>
        <taxon>Poales</taxon>
        <taxon>Poaceae</taxon>
        <taxon>BOP clade</taxon>
        <taxon>Oryzoideae</taxon>
        <taxon>Oryzeae</taxon>
        <taxon>Oryzinae</taxon>
        <taxon>Oryza</taxon>
        <taxon>Oryza sativa</taxon>
    </lineage>
</organism>